<feature type="chain" id="PRO_1000146826" description="Nicotinate phosphoribosyltransferase">
    <location>
        <begin position="1"/>
        <end position="434"/>
    </location>
</feature>
<feature type="modified residue" description="Phosphohistidine; by autocatalysis" evidence="1">
    <location>
        <position position="242"/>
    </location>
</feature>
<gene>
    <name evidence="1" type="primary">pncB</name>
    <name type="ordered locus">Arad_0309</name>
</gene>
<protein>
    <recommendedName>
        <fullName evidence="1">Nicotinate phosphoribosyltransferase</fullName>
        <shortName evidence="1">NAPRTase</shortName>
        <ecNumber evidence="1">6.3.4.21</ecNumber>
    </recommendedName>
</protein>
<sequence>MTKTDIAARVYNHTWKLDPIVRSLIDTDFYKLLMLQMIWKLYPDVDATFSLINRTKSVRLAEVIDEKELREQLDHARTLRLSKKEMIWLAGNSFYGRAQIFEPEFLTWLSNFQLPDYELSKRDGQYVLDFHGSWKETTMWEIPALAIINELRSRTALKALGPFTLDVLYARAKAKMWEKVERLRELPDLHISDFGTRRRHSFLWQRWCVEALKEGVPHAFTGTSNVLLAMDSDLEAVGTNAHELPMVAAALAKTDEELGKAPYKVLRDWNRLYGGNLLVVLPDAFGTASFLRNAPEWVADWTGFRPDSAPPIEGGEKIIDWWKKMGRDPRQKLLIFSDGLDVDAIIATYKHFEGRVRMGFGWGTNLTNDFAGCAPTEIHGLNPISIVCKVIEANGRPAVKLSDNPQKATGEPAEVERYLKFFGAEDRVDHEVLV</sequence>
<name>PNCB_RHIR8</name>
<accession>B9J6S5</accession>
<proteinExistence type="inferred from homology"/>
<evidence type="ECO:0000255" key="1">
    <source>
        <dbReference type="HAMAP-Rule" id="MF_00570"/>
    </source>
</evidence>
<reference key="1">
    <citation type="journal article" date="2009" name="J. Bacteriol.">
        <title>Genome sequences of three Agrobacterium biovars help elucidate the evolution of multichromosome genomes in bacteria.</title>
        <authorList>
            <person name="Slater S.C."/>
            <person name="Goldman B.S."/>
            <person name="Goodner B."/>
            <person name="Setubal J.C."/>
            <person name="Farrand S.K."/>
            <person name="Nester E.W."/>
            <person name="Burr T.J."/>
            <person name="Banta L."/>
            <person name="Dickerman A.W."/>
            <person name="Paulsen I."/>
            <person name="Otten L."/>
            <person name="Suen G."/>
            <person name="Welch R."/>
            <person name="Almeida N.F."/>
            <person name="Arnold F."/>
            <person name="Burton O.T."/>
            <person name="Du Z."/>
            <person name="Ewing A."/>
            <person name="Godsy E."/>
            <person name="Heisel S."/>
            <person name="Houmiel K.L."/>
            <person name="Jhaveri J."/>
            <person name="Lu J."/>
            <person name="Miller N.M."/>
            <person name="Norton S."/>
            <person name="Chen Q."/>
            <person name="Phoolcharoen W."/>
            <person name="Ohlin V."/>
            <person name="Ondrusek D."/>
            <person name="Pride N."/>
            <person name="Stricklin S.L."/>
            <person name="Sun J."/>
            <person name="Wheeler C."/>
            <person name="Wilson L."/>
            <person name="Zhu H."/>
            <person name="Wood D.W."/>
        </authorList>
    </citation>
    <scope>NUCLEOTIDE SEQUENCE [LARGE SCALE GENOMIC DNA]</scope>
    <source>
        <strain>K84 / ATCC BAA-868</strain>
    </source>
</reference>
<dbReference type="EC" id="6.3.4.21" evidence="1"/>
<dbReference type="EMBL" id="CP000628">
    <property type="protein sequence ID" value="ACM25031.1"/>
    <property type="molecule type" value="Genomic_DNA"/>
</dbReference>
<dbReference type="RefSeq" id="WP_007702951.1">
    <property type="nucleotide sequence ID" value="NC_011985.1"/>
</dbReference>
<dbReference type="SMR" id="B9J6S5"/>
<dbReference type="STRING" id="311403.Arad_0309"/>
<dbReference type="GeneID" id="86850673"/>
<dbReference type="KEGG" id="ara:Arad_0309"/>
<dbReference type="eggNOG" id="COG1488">
    <property type="taxonomic scope" value="Bacteria"/>
</dbReference>
<dbReference type="HOGENOM" id="CLU_030991_1_0_5"/>
<dbReference type="UniPathway" id="UPA00253">
    <property type="reaction ID" value="UER00457"/>
</dbReference>
<dbReference type="Proteomes" id="UP000001600">
    <property type="component" value="Chromosome 1"/>
</dbReference>
<dbReference type="GO" id="GO:0005829">
    <property type="term" value="C:cytosol"/>
    <property type="evidence" value="ECO:0007669"/>
    <property type="project" value="TreeGrafter"/>
</dbReference>
<dbReference type="GO" id="GO:0004516">
    <property type="term" value="F:nicotinate phosphoribosyltransferase activity"/>
    <property type="evidence" value="ECO:0007669"/>
    <property type="project" value="UniProtKB-UniRule"/>
</dbReference>
<dbReference type="GO" id="GO:0034355">
    <property type="term" value="P:NAD biosynthetic process via the salvage pathway"/>
    <property type="evidence" value="ECO:0007669"/>
    <property type="project" value="TreeGrafter"/>
</dbReference>
<dbReference type="Gene3D" id="3.20.140.10">
    <property type="entry name" value="nicotinate phosphoribosyltransferase"/>
    <property type="match status" value="1"/>
</dbReference>
<dbReference type="HAMAP" id="MF_00570">
    <property type="entry name" value="NAPRTase"/>
    <property type="match status" value="1"/>
</dbReference>
<dbReference type="InterPro" id="IPR041525">
    <property type="entry name" value="N/Namide_PRibTrfase"/>
</dbReference>
<dbReference type="InterPro" id="IPR040727">
    <property type="entry name" value="NAPRTase_N"/>
</dbReference>
<dbReference type="InterPro" id="IPR006406">
    <property type="entry name" value="Nic_PRibTrfase"/>
</dbReference>
<dbReference type="InterPro" id="IPR007229">
    <property type="entry name" value="Nic_PRibTrfase-Fam"/>
</dbReference>
<dbReference type="InterPro" id="IPR036068">
    <property type="entry name" value="Nicotinate_pribotase-like_C"/>
</dbReference>
<dbReference type="NCBIfam" id="TIGR01514">
    <property type="entry name" value="NAPRTase"/>
    <property type="match status" value="1"/>
</dbReference>
<dbReference type="NCBIfam" id="NF003704">
    <property type="entry name" value="PRK05321.1"/>
    <property type="match status" value="1"/>
</dbReference>
<dbReference type="PANTHER" id="PTHR11098">
    <property type="entry name" value="NICOTINATE PHOSPHORIBOSYLTRANSFERASE"/>
    <property type="match status" value="1"/>
</dbReference>
<dbReference type="PANTHER" id="PTHR11098:SF1">
    <property type="entry name" value="NICOTINATE PHOSPHORIBOSYLTRANSFERASE"/>
    <property type="match status" value="1"/>
</dbReference>
<dbReference type="Pfam" id="PF04095">
    <property type="entry name" value="NAPRTase"/>
    <property type="match status" value="1"/>
</dbReference>
<dbReference type="Pfam" id="PF17767">
    <property type="entry name" value="NAPRTase_N"/>
    <property type="match status" value="1"/>
</dbReference>
<dbReference type="PIRSF" id="PIRSF000484">
    <property type="entry name" value="NAPRT"/>
    <property type="match status" value="1"/>
</dbReference>
<dbReference type="SUPFAM" id="SSF51690">
    <property type="entry name" value="Nicotinate/Quinolinate PRTase C-terminal domain-like"/>
    <property type="match status" value="1"/>
</dbReference>
<dbReference type="SUPFAM" id="SSF54675">
    <property type="entry name" value="Nicotinate/Quinolinate PRTase N-terminal domain-like"/>
    <property type="match status" value="1"/>
</dbReference>
<comment type="function">
    <text evidence="1">Catalyzes the synthesis of beta-nicotinate D-ribonucleotide from nicotinate and 5-phospho-D-ribose 1-phosphate at the expense of ATP.</text>
</comment>
<comment type="catalytic activity">
    <reaction evidence="1">
        <text>nicotinate + 5-phospho-alpha-D-ribose 1-diphosphate + ATP + H2O = nicotinate beta-D-ribonucleotide + ADP + phosphate + diphosphate</text>
        <dbReference type="Rhea" id="RHEA:36163"/>
        <dbReference type="ChEBI" id="CHEBI:15377"/>
        <dbReference type="ChEBI" id="CHEBI:30616"/>
        <dbReference type="ChEBI" id="CHEBI:32544"/>
        <dbReference type="ChEBI" id="CHEBI:33019"/>
        <dbReference type="ChEBI" id="CHEBI:43474"/>
        <dbReference type="ChEBI" id="CHEBI:57502"/>
        <dbReference type="ChEBI" id="CHEBI:58017"/>
        <dbReference type="ChEBI" id="CHEBI:456216"/>
        <dbReference type="EC" id="6.3.4.21"/>
    </reaction>
</comment>
<comment type="pathway">
    <text evidence="1">Cofactor biosynthesis; NAD(+) biosynthesis; nicotinate D-ribonucleotide from nicotinate: step 1/1.</text>
</comment>
<comment type="PTM">
    <text evidence="1">Transiently phosphorylated on a His residue during the reaction cycle. Phosphorylation strongly increases the affinity for substrates and increases the rate of nicotinate D-ribonucleotide production. Dephosphorylation regenerates the low-affinity form of the enzyme, leading to product release.</text>
</comment>
<comment type="similarity">
    <text evidence="1">Belongs to the NAPRTase family.</text>
</comment>
<keyword id="KW-0436">Ligase</keyword>
<keyword id="KW-0597">Phosphoprotein</keyword>
<keyword id="KW-0662">Pyridine nucleotide biosynthesis</keyword>
<organism>
    <name type="scientific">Rhizobium rhizogenes (strain K84 / ATCC BAA-868)</name>
    <name type="common">Agrobacterium radiobacter</name>
    <dbReference type="NCBI Taxonomy" id="311403"/>
    <lineage>
        <taxon>Bacteria</taxon>
        <taxon>Pseudomonadati</taxon>
        <taxon>Pseudomonadota</taxon>
        <taxon>Alphaproteobacteria</taxon>
        <taxon>Hyphomicrobiales</taxon>
        <taxon>Rhizobiaceae</taxon>
        <taxon>Rhizobium/Agrobacterium group</taxon>
        <taxon>Rhizobium</taxon>
    </lineage>
</organism>